<gene>
    <name type="primary">Grd</name>
    <name type="ORF">CG7446</name>
</gene>
<name>GBRAL_DROME</name>
<protein>
    <recommendedName>
        <fullName>Gamma-aminobutyric acid receptor alpha-like</fullName>
    </recommendedName>
    <alternativeName>
        <fullName>GABA(A) receptor alpha-like and glycine receptor-like subunit of Drosophila</fullName>
        <shortName>GRD</shortName>
    </alternativeName>
</protein>
<sequence>MCTMPATRDASGSGDASTDLIAARSLSSHQGQRSNLRIFKLLISCCLLMLCIYPNAWPWSIGPGSGPFSVSADSIKGRGDTHRLGEMGTSLSSSLPSSWLTQSNNHANISELLDNLLRGYDNSIRPDFGGPPATIEVDIMVRSMGPISEVDMTYSMDCYFRQSWVDKRLAFEGAQDTLALSVSMLARIWKPDTYFYNGKQSYLHTITTPNKFVRIYQNGRVLYSSRLTIKAGCPMNLADFPMDIQKCPLKFGSFGYTTSDVIYRWNKERPPVAIAEDMKLSQFDLVDCPAGNLTDIVYKAAAPRPQRRPFNNKDPPRPTSKVMTTFAGPAAKNQHVRGTGLKLDKGAFGTGRDATGGSGSTTGLSGTITLETNHPSEYSMLMVNFHLQRHMGNFLIQVYGPCCLLVVLSWVSFWLNREATADRVSLGITTVLTMTFLGLEARTDLPKVSYPTALDFFVFLSFGFIFATILQFAVVHYYTKYGSGECYFIIEELDSESGESETEPLTSDFRGSTESKIYEVIPLSMCAISMPPPPTRLGMLTSRNRRPRNRRHGLWSMKLLGLFDWRRRRKPPRADSDEDEDDEQTQLRANEAPTTSAAAAAAQAAAQAARISPPTGGRRRMSYYRREEMEARRKGKRTPQYNSVSKIDRASRIVFPLLFILINVFYWYGYLSRSSRILANTPDAST</sequence>
<dbReference type="EMBL" id="X78349">
    <property type="protein sequence ID" value="CAA55144.1"/>
    <property type="molecule type" value="mRNA"/>
</dbReference>
<dbReference type="EMBL" id="AE014296">
    <property type="protein sequence ID" value="AAF49298.2"/>
    <property type="molecule type" value="Genomic_DNA"/>
</dbReference>
<dbReference type="PIR" id="S60749">
    <property type="entry name" value="S60749"/>
</dbReference>
<dbReference type="RefSeq" id="NP_524131.1">
    <property type="nucleotide sequence ID" value="NM_079407.3"/>
</dbReference>
<dbReference type="SMR" id="Q24352"/>
<dbReference type="FunCoup" id="Q24352">
    <property type="interactions" value="158"/>
</dbReference>
<dbReference type="STRING" id="7227.FBpp0074905"/>
<dbReference type="TCDB" id="1.A.9.5.6">
    <property type="family name" value="the neurotransmitter receptor, cys loop, ligand-gated ion channel (lic) family"/>
</dbReference>
<dbReference type="GlyCosmos" id="Q24352">
    <property type="glycosylation" value="2 sites, No reported glycans"/>
</dbReference>
<dbReference type="GlyGen" id="Q24352">
    <property type="glycosylation" value="2 sites"/>
</dbReference>
<dbReference type="PaxDb" id="7227-FBpp0074905"/>
<dbReference type="DNASU" id="39984"/>
<dbReference type="EnsemblMetazoa" id="FBtr0075139">
    <property type="protein sequence ID" value="FBpp0074905"/>
    <property type="gene ID" value="FBgn0001134"/>
</dbReference>
<dbReference type="GeneID" id="39984"/>
<dbReference type="KEGG" id="dme:Dmel_CG7446"/>
<dbReference type="AGR" id="FB:FBgn0001134"/>
<dbReference type="CTD" id="39984"/>
<dbReference type="FlyBase" id="FBgn0001134">
    <property type="gene designation" value="Grd"/>
</dbReference>
<dbReference type="VEuPathDB" id="VectorBase:FBgn0001134"/>
<dbReference type="eggNOG" id="KOG3642">
    <property type="taxonomic scope" value="Eukaryota"/>
</dbReference>
<dbReference type="GeneTree" id="ENSGT00940000171178"/>
<dbReference type="HOGENOM" id="CLU_010920_2_2_1"/>
<dbReference type="InParanoid" id="Q24352"/>
<dbReference type="OMA" id="YYRREEM"/>
<dbReference type="OrthoDB" id="203862at2759"/>
<dbReference type="PhylomeDB" id="Q24352"/>
<dbReference type="Reactome" id="R-DME-977443">
    <property type="pathway name" value="GABA receptor activation"/>
</dbReference>
<dbReference type="BioGRID-ORCS" id="39984">
    <property type="hits" value="0 hits in 3 CRISPR screens"/>
</dbReference>
<dbReference type="GenomeRNAi" id="39984"/>
<dbReference type="PRO" id="PR:Q24352"/>
<dbReference type="Proteomes" id="UP000000803">
    <property type="component" value="Chromosome 3L"/>
</dbReference>
<dbReference type="Bgee" id="FBgn0001134">
    <property type="expression patterns" value="Expressed in lamina monopolar neuron L2 (Drosophila) in insect head and 27 other cell types or tissues"/>
</dbReference>
<dbReference type="ExpressionAtlas" id="Q24352">
    <property type="expression patterns" value="baseline and differential"/>
</dbReference>
<dbReference type="GO" id="GO:0034707">
    <property type="term" value="C:chloride channel complex"/>
    <property type="evidence" value="ECO:0007669"/>
    <property type="project" value="UniProtKB-KW"/>
</dbReference>
<dbReference type="GO" id="GO:0016020">
    <property type="term" value="C:membrane"/>
    <property type="evidence" value="ECO:0000304"/>
    <property type="project" value="UniProtKB"/>
</dbReference>
<dbReference type="GO" id="GO:0005886">
    <property type="term" value="C:plasma membrane"/>
    <property type="evidence" value="ECO:0000250"/>
    <property type="project" value="FlyBase"/>
</dbReference>
<dbReference type="GO" id="GO:0045211">
    <property type="term" value="C:postsynaptic membrane"/>
    <property type="evidence" value="ECO:0007669"/>
    <property type="project" value="UniProtKB-SubCell"/>
</dbReference>
<dbReference type="GO" id="GO:0016933">
    <property type="term" value="F:extracellularly glycine-gated ion channel activity"/>
    <property type="evidence" value="ECO:0000250"/>
    <property type="project" value="FlyBase"/>
</dbReference>
<dbReference type="GO" id="GO:0004890">
    <property type="term" value="F:GABA-A receptor activity"/>
    <property type="evidence" value="ECO:0000314"/>
    <property type="project" value="UniProtKB"/>
</dbReference>
<dbReference type="GO" id="GO:0022851">
    <property type="term" value="F:GABA-gated chloride ion channel activity"/>
    <property type="evidence" value="ECO:0000314"/>
    <property type="project" value="FlyBase"/>
</dbReference>
<dbReference type="GO" id="GO:0022852">
    <property type="term" value="F:glycine-gated chloride ion channel activity"/>
    <property type="evidence" value="ECO:0000304"/>
    <property type="project" value="FlyBase"/>
</dbReference>
<dbReference type="GO" id="GO:0015276">
    <property type="term" value="F:ligand-gated monoatomic ion channel activity"/>
    <property type="evidence" value="ECO:0000314"/>
    <property type="project" value="UniProtKB"/>
</dbReference>
<dbReference type="GO" id="GO:0005261">
    <property type="term" value="F:monoatomic cation channel activity"/>
    <property type="evidence" value="ECO:0000314"/>
    <property type="project" value="UniProtKB"/>
</dbReference>
<dbReference type="GO" id="GO:1902476">
    <property type="term" value="P:chloride transmembrane transport"/>
    <property type="evidence" value="ECO:0000318"/>
    <property type="project" value="GO_Central"/>
</dbReference>
<dbReference type="GO" id="GO:0006811">
    <property type="term" value="P:monoatomic ion transport"/>
    <property type="evidence" value="ECO:0000314"/>
    <property type="project" value="UniProtKB"/>
</dbReference>
<dbReference type="GO" id="GO:1904456">
    <property type="term" value="P:negative regulation of neuronal action potential"/>
    <property type="evidence" value="ECO:0000315"/>
    <property type="project" value="FlyBase"/>
</dbReference>
<dbReference type="GO" id="GO:0042752">
    <property type="term" value="P:regulation of circadian rhythm"/>
    <property type="evidence" value="ECO:0000315"/>
    <property type="project" value="FlyBase"/>
</dbReference>
<dbReference type="GO" id="GO:0060012">
    <property type="term" value="P:synaptic transmission, glycinergic"/>
    <property type="evidence" value="ECO:0000316"/>
    <property type="project" value="FlyBase"/>
</dbReference>
<dbReference type="CDD" id="cd19007">
    <property type="entry name" value="LGIC_ECD_GABAR_GRD-like"/>
    <property type="match status" value="1"/>
</dbReference>
<dbReference type="CDD" id="cd19049">
    <property type="entry name" value="LGIC_TM_anion"/>
    <property type="match status" value="1"/>
</dbReference>
<dbReference type="FunFam" id="1.20.58.390:FF:000087">
    <property type="entry name" value="GABA-gated ion channel"/>
    <property type="match status" value="1"/>
</dbReference>
<dbReference type="FunFam" id="1.20.58.390:FF:000118">
    <property type="entry name" value="GABA-gated ion channel"/>
    <property type="match status" value="1"/>
</dbReference>
<dbReference type="FunFam" id="2.70.170.10:FF:000043">
    <property type="entry name" value="Gamma-aminobutyric acid receptor alpha-like"/>
    <property type="match status" value="1"/>
</dbReference>
<dbReference type="Gene3D" id="2.70.170.10">
    <property type="entry name" value="Neurotransmitter-gated ion-channel ligand-binding domain"/>
    <property type="match status" value="1"/>
</dbReference>
<dbReference type="Gene3D" id="1.20.58.390">
    <property type="entry name" value="Neurotransmitter-gated ion-channel transmembrane domain"/>
    <property type="match status" value="2"/>
</dbReference>
<dbReference type="InterPro" id="IPR006028">
    <property type="entry name" value="GABAA/Glycine_rcpt"/>
</dbReference>
<dbReference type="InterPro" id="IPR006202">
    <property type="entry name" value="Neur_chan_lig-bd"/>
</dbReference>
<dbReference type="InterPro" id="IPR036734">
    <property type="entry name" value="Neur_chan_lig-bd_sf"/>
</dbReference>
<dbReference type="InterPro" id="IPR006201">
    <property type="entry name" value="Neur_channel"/>
</dbReference>
<dbReference type="InterPro" id="IPR036719">
    <property type="entry name" value="Neuro-gated_channel_TM_sf"/>
</dbReference>
<dbReference type="InterPro" id="IPR038050">
    <property type="entry name" value="Neuro_actylchol_rec"/>
</dbReference>
<dbReference type="InterPro" id="IPR006029">
    <property type="entry name" value="Neurotrans-gated_channel_TM"/>
</dbReference>
<dbReference type="InterPro" id="IPR018000">
    <property type="entry name" value="Neurotransmitter_ion_chnl_CS"/>
</dbReference>
<dbReference type="PANTHER" id="PTHR18945">
    <property type="entry name" value="NEUROTRANSMITTER GATED ION CHANNEL"/>
    <property type="match status" value="1"/>
</dbReference>
<dbReference type="Pfam" id="PF02931">
    <property type="entry name" value="Neur_chan_LBD"/>
    <property type="match status" value="1"/>
</dbReference>
<dbReference type="Pfam" id="PF02932">
    <property type="entry name" value="Neur_chan_memb"/>
    <property type="match status" value="1"/>
</dbReference>
<dbReference type="PRINTS" id="PR00253">
    <property type="entry name" value="GABAARECEPTR"/>
</dbReference>
<dbReference type="PRINTS" id="PR00252">
    <property type="entry name" value="NRIONCHANNEL"/>
</dbReference>
<dbReference type="SUPFAM" id="SSF90112">
    <property type="entry name" value="Neurotransmitter-gated ion-channel transmembrane pore"/>
    <property type="match status" value="1"/>
</dbReference>
<dbReference type="SUPFAM" id="SSF63712">
    <property type="entry name" value="Nicotinic receptor ligand binding domain-like"/>
    <property type="match status" value="1"/>
</dbReference>
<dbReference type="PROSITE" id="PS00236">
    <property type="entry name" value="NEUROTR_ION_CHANNEL"/>
    <property type="match status" value="1"/>
</dbReference>
<feature type="signal peptide" evidence="2">
    <location>
        <begin position="1"/>
        <end position="58"/>
    </location>
</feature>
<feature type="chain" id="PRO_0000000451" description="Gamma-aminobutyric acid receptor alpha-like">
    <location>
        <begin position="59"/>
        <end position="686"/>
    </location>
</feature>
<feature type="topological domain" description="Extracellular" evidence="2">
    <location>
        <begin position="97"/>
        <end position="393"/>
    </location>
</feature>
<feature type="transmembrane region" description="Helical" evidence="2">
    <location>
        <begin position="394"/>
        <end position="414"/>
    </location>
</feature>
<feature type="transmembrane region" description="Helical" evidence="2">
    <location>
        <begin position="424"/>
        <end position="441"/>
    </location>
</feature>
<feature type="transmembrane region" description="Helical" evidence="2">
    <location>
        <begin position="456"/>
        <end position="476"/>
    </location>
</feature>
<feature type="topological domain" description="Cytoplasmic" evidence="2">
    <location>
        <begin position="477"/>
        <end position="650"/>
    </location>
</feature>
<feature type="transmembrane region" description="Helical" evidence="2">
    <location>
        <begin position="651"/>
        <end position="671"/>
    </location>
</feature>
<feature type="region of interest" description="Disordered" evidence="3">
    <location>
        <begin position="570"/>
        <end position="641"/>
    </location>
</feature>
<feature type="compositionally biased region" description="Polar residues" evidence="3">
    <location>
        <begin position="586"/>
        <end position="596"/>
    </location>
</feature>
<feature type="compositionally biased region" description="Low complexity" evidence="3">
    <location>
        <begin position="597"/>
        <end position="609"/>
    </location>
</feature>
<feature type="glycosylation site" description="N-linked (GlcNAc...) asparagine" evidence="2">
    <location>
        <position position="108"/>
    </location>
</feature>
<feature type="glycosylation site" description="N-linked (GlcNAc...) asparagine" evidence="2">
    <location>
        <position position="292"/>
    </location>
</feature>
<feature type="disulfide bond" evidence="1">
    <location>
        <begin position="233"/>
        <end position="247"/>
    </location>
</feature>
<proteinExistence type="evidence at protein level"/>
<reference key="1">
    <citation type="journal article" date="1994" name="J. Neurochem.">
        <title>Sequence of a Drosophila ligand-gated ion-channel polypeptide with an unusual amino-terminal extracellular domain.</title>
        <authorList>
            <person name="Harvey R.J."/>
            <person name="Schmitt B."/>
            <person name="Hermans-Borgmeyer I."/>
            <person name="Gundelfinger E.D."/>
            <person name="Betz H."/>
            <person name="Darlison M.G."/>
        </authorList>
    </citation>
    <scope>NUCLEOTIDE SEQUENCE [MRNA]</scope>
    <source>
        <strain>Berlin</strain>
        <tissue>Head</tissue>
        <tissue>Salivary gland</tissue>
    </source>
</reference>
<reference key="2">
    <citation type="journal article" date="2000" name="Science">
        <title>The genome sequence of Drosophila melanogaster.</title>
        <authorList>
            <person name="Adams M.D."/>
            <person name="Celniker S.E."/>
            <person name="Holt R.A."/>
            <person name="Evans C.A."/>
            <person name="Gocayne J.D."/>
            <person name="Amanatides P.G."/>
            <person name="Scherer S.E."/>
            <person name="Li P.W."/>
            <person name="Hoskins R.A."/>
            <person name="Galle R.F."/>
            <person name="George R.A."/>
            <person name="Lewis S.E."/>
            <person name="Richards S."/>
            <person name="Ashburner M."/>
            <person name="Henderson S.N."/>
            <person name="Sutton G.G."/>
            <person name="Wortman J.R."/>
            <person name="Yandell M.D."/>
            <person name="Zhang Q."/>
            <person name="Chen L.X."/>
            <person name="Brandon R.C."/>
            <person name="Rogers Y.-H.C."/>
            <person name="Blazej R.G."/>
            <person name="Champe M."/>
            <person name="Pfeiffer B.D."/>
            <person name="Wan K.H."/>
            <person name="Doyle C."/>
            <person name="Baxter E.G."/>
            <person name="Helt G."/>
            <person name="Nelson C.R."/>
            <person name="Miklos G.L.G."/>
            <person name="Abril J.F."/>
            <person name="Agbayani A."/>
            <person name="An H.-J."/>
            <person name="Andrews-Pfannkoch C."/>
            <person name="Baldwin D."/>
            <person name="Ballew R.M."/>
            <person name="Basu A."/>
            <person name="Baxendale J."/>
            <person name="Bayraktaroglu L."/>
            <person name="Beasley E.M."/>
            <person name="Beeson K.Y."/>
            <person name="Benos P.V."/>
            <person name="Berman B.P."/>
            <person name="Bhandari D."/>
            <person name="Bolshakov S."/>
            <person name="Borkova D."/>
            <person name="Botchan M.R."/>
            <person name="Bouck J."/>
            <person name="Brokstein P."/>
            <person name="Brottier P."/>
            <person name="Burtis K.C."/>
            <person name="Busam D.A."/>
            <person name="Butler H."/>
            <person name="Cadieu E."/>
            <person name="Center A."/>
            <person name="Chandra I."/>
            <person name="Cherry J.M."/>
            <person name="Cawley S."/>
            <person name="Dahlke C."/>
            <person name="Davenport L.B."/>
            <person name="Davies P."/>
            <person name="de Pablos B."/>
            <person name="Delcher A."/>
            <person name="Deng Z."/>
            <person name="Mays A.D."/>
            <person name="Dew I."/>
            <person name="Dietz S.M."/>
            <person name="Dodson K."/>
            <person name="Doup L.E."/>
            <person name="Downes M."/>
            <person name="Dugan-Rocha S."/>
            <person name="Dunkov B.C."/>
            <person name="Dunn P."/>
            <person name="Durbin K.J."/>
            <person name="Evangelista C.C."/>
            <person name="Ferraz C."/>
            <person name="Ferriera S."/>
            <person name="Fleischmann W."/>
            <person name="Fosler C."/>
            <person name="Gabrielian A.E."/>
            <person name="Garg N.S."/>
            <person name="Gelbart W.M."/>
            <person name="Glasser K."/>
            <person name="Glodek A."/>
            <person name="Gong F."/>
            <person name="Gorrell J.H."/>
            <person name="Gu Z."/>
            <person name="Guan P."/>
            <person name="Harris M."/>
            <person name="Harris N.L."/>
            <person name="Harvey D.A."/>
            <person name="Heiman T.J."/>
            <person name="Hernandez J.R."/>
            <person name="Houck J."/>
            <person name="Hostin D."/>
            <person name="Houston K.A."/>
            <person name="Howland T.J."/>
            <person name="Wei M.-H."/>
            <person name="Ibegwam C."/>
            <person name="Jalali M."/>
            <person name="Kalush F."/>
            <person name="Karpen G.H."/>
            <person name="Ke Z."/>
            <person name="Kennison J.A."/>
            <person name="Ketchum K.A."/>
            <person name="Kimmel B.E."/>
            <person name="Kodira C.D."/>
            <person name="Kraft C.L."/>
            <person name="Kravitz S."/>
            <person name="Kulp D."/>
            <person name="Lai Z."/>
            <person name="Lasko P."/>
            <person name="Lei Y."/>
            <person name="Levitsky A.A."/>
            <person name="Li J.H."/>
            <person name="Li Z."/>
            <person name="Liang Y."/>
            <person name="Lin X."/>
            <person name="Liu X."/>
            <person name="Mattei B."/>
            <person name="McIntosh T.C."/>
            <person name="McLeod M.P."/>
            <person name="McPherson D."/>
            <person name="Merkulov G."/>
            <person name="Milshina N.V."/>
            <person name="Mobarry C."/>
            <person name="Morris J."/>
            <person name="Moshrefi A."/>
            <person name="Mount S.M."/>
            <person name="Moy M."/>
            <person name="Murphy B."/>
            <person name="Murphy L."/>
            <person name="Muzny D.M."/>
            <person name="Nelson D.L."/>
            <person name="Nelson D.R."/>
            <person name="Nelson K.A."/>
            <person name="Nixon K."/>
            <person name="Nusskern D.R."/>
            <person name="Pacleb J.M."/>
            <person name="Palazzolo M."/>
            <person name="Pittman G.S."/>
            <person name="Pan S."/>
            <person name="Pollard J."/>
            <person name="Puri V."/>
            <person name="Reese M.G."/>
            <person name="Reinert K."/>
            <person name="Remington K."/>
            <person name="Saunders R.D.C."/>
            <person name="Scheeler F."/>
            <person name="Shen H."/>
            <person name="Shue B.C."/>
            <person name="Siden-Kiamos I."/>
            <person name="Simpson M."/>
            <person name="Skupski M.P."/>
            <person name="Smith T.J."/>
            <person name="Spier E."/>
            <person name="Spradling A.C."/>
            <person name="Stapleton M."/>
            <person name="Strong R."/>
            <person name="Sun E."/>
            <person name="Svirskas R."/>
            <person name="Tector C."/>
            <person name="Turner R."/>
            <person name="Venter E."/>
            <person name="Wang A.H."/>
            <person name="Wang X."/>
            <person name="Wang Z.-Y."/>
            <person name="Wassarman D.A."/>
            <person name="Weinstock G.M."/>
            <person name="Weissenbach J."/>
            <person name="Williams S.M."/>
            <person name="Woodage T."/>
            <person name="Worley K.C."/>
            <person name="Wu D."/>
            <person name="Yang S."/>
            <person name="Yao Q.A."/>
            <person name="Ye J."/>
            <person name="Yeh R.-F."/>
            <person name="Zaveri J.S."/>
            <person name="Zhan M."/>
            <person name="Zhang G."/>
            <person name="Zhao Q."/>
            <person name="Zheng L."/>
            <person name="Zheng X.H."/>
            <person name="Zhong F.N."/>
            <person name="Zhong W."/>
            <person name="Zhou X."/>
            <person name="Zhu S.C."/>
            <person name="Zhu X."/>
            <person name="Smith H.O."/>
            <person name="Gibbs R.A."/>
            <person name="Myers E.W."/>
            <person name="Rubin G.M."/>
            <person name="Venter J.C."/>
        </authorList>
    </citation>
    <scope>NUCLEOTIDE SEQUENCE [LARGE SCALE GENOMIC DNA]</scope>
    <source>
        <strain>Berkeley</strain>
    </source>
</reference>
<reference key="3">
    <citation type="journal article" date="2002" name="Genome Biol.">
        <title>Annotation of the Drosophila melanogaster euchromatic genome: a systematic review.</title>
        <authorList>
            <person name="Misra S."/>
            <person name="Crosby M.A."/>
            <person name="Mungall C.J."/>
            <person name="Matthews B.B."/>
            <person name="Campbell K.S."/>
            <person name="Hradecky P."/>
            <person name="Huang Y."/>
            <person name="Kaminker J.S."/>
            <person name="Millburn G.H."/>
            <person name="Prochnik S.E."/>
            <person name="Smith C.D."/>
            <person name="Tupy J.L."/>
            <person name="Whitfield E.J."/>
            <person name="Bayraktaroglu L."/>
            <person name="Berman B.P."/>
            <person name="Bettencourt B.R."/>
            <person name="Celniker S.E."/>
            <person name="de Grey A.D.N.J."/>
            <person name="Drysdale R.A."/>
            <person name="Harris N.L."/>
            <person name="Richter J."/>
            <person name="Russo S."/>
            <person name="Schroeder A.J."/>
            <person name="Shu S.Q."/>
            <person name="Stapleton M."/>
            <person name="Yamada C."/>
            <person name="Ashburner M."/>
            <person name="Gelbart W.M."/>
            <person name="Rubin G.M."/>
            <person name="Lewis S.E."/>
        </authorList>
    </citation>
    <scope>GENOME REANNOTATION</scope>
    <source>
        <strain>Berkeley</strain>
    </source>
</reference>
<reference key="4">
    <citation type="journal article" date="2004" name="Br. J. Pharmacol.">
        <title>Drosophila melanogaster GRD and LCCH3 subunits form heteromultimeric GABA-gated cation channels.</title>
        <authorList>
            <person name="Gisselmann G."/>
            <person name="Plonka J."/>
            <person name="Pusch H."/>
            <person name="Hatt H."/>
        </authorList>
    </citation>
    <scope>FUNCTION</scope>
    <scope>INTERACTION WITH LCCH3</scope>
</reference>
<accession>Q24352</accession>
<accession>Q9TX50</accession>
<accession>Q9VVL3</accession>
<organism>
    <name type="scientific">Drosophila melanogaster</name>
    <name type="common">Fruit fly</name>
    <dbReference type="NCBI Taxonomy" id="7227"/>
    <lineage>
        <taxon>Eukaryota</taxon>
        <taxon>Metazoa</taxon>
        <taxon>Ecdysozoa</taxon>
        <taxon>Arthropoda</taxon>
        <taxon>Hexapoda</taxon>
        <taxon>Insecta</taxon>
        <taxon>Pterygota</taxon>
        <taxon>Neoptera</taxon>
        <taxon>Endopterygota</taxon>
        <taxon>Diptera</taxon>
        <taxon>Brachycera</taxon>
        <taxon>Muscomorpha</taxon>
        <taxon>Ephydroidea</taxon>
        <taxon>Drosophilidae</taxon>
        <taxon>Drosophila</taxon>
        <taxon>Sophophora</taxon>
    </lineage>
</organism>
<evidence type="ECO:0000250" key="1"/>
<evidence type="ECO:0000255" key="2"/>
<evidence type="ECO:0000256" key="3">
    <source>
        <dbReference type="SAM" id="MobiDB-lite"/>
    </source>
</evidence>
<evidence type="ECO:0000269" key="4">
    <source>
    </source>
</evidence>
<evidence type="ECO:0000305" key="5"/>
<comment type="function">
    <text evidence="4">GABA, an inhibitory neurotransmitter, mediates neuronal inhibition by binding to the GABA receptor and opening an integral chloride channel. May combine with the ligand-gated ion channel subunit Lcch3 to form cation-selective GABA-gated ion channels.</text>
</comment>
<comment type="subunit">
    <text evidence="4">Generally pentameric. There are five types of GABA(A) receptor chains: alpha, beta, gamma, delta, and rho. Interacts with Lcch3 (beta chain).</text>
</comment>
<comment type="subcellular location">
    <subcellularLocation>
        <location>Postsynaptic cell membrane</location>
        <topology>Multi-pass membrane protein</topology>
    </subcellularLocation>
    <subcellularLocation>
        <location>Cell membrane</location>
        <topology>Multi-pass membrane protein</topology>
    </subcellularLocation>
</comment>
<comment type="similarity">
    <text evidence="5">Belongs to the ligand-gated ion channel (TC 1.A.9) family. Gamma-aminobutyric acid receptor (TC 1.A.9.5) subfamily.</text>
</comment>
<keyword id="KW-1003">Cell membrane</keyword>
<keyword id="KW-0868">Chloride</keyword>
<keyword id="KW-0869">Chloride channel</keyword>
<keyword id="KW-1015">Disulfide bond</keyword>
<keyword id="KW-0325">Glycoprotein</keyword>
<keyword id="KW-0407">Ion channel</keyword>
<keyword id="KW-0406">Ion transport</keyword>
<keyword id="KW-1071">Ligand-gated ion channel</keyword>
<keyword id="KW-0472">Membrane</keyword>
<keyword id="KW-0628">Postsynaptic cell membrane</keyword>
<keyword id="KW-0675">Receptor</keyword>
<keyword id="KW-1185">Reference proteome</keyword>
<keyword id="KW-0732">Signal</keyword>
<keyword id="KW-0770">Synapse</keyword>
<keyword id="KW-0812">Transmembrane</keyword>
<keyword id="KW-1133">Transmembrane helix</keyword>
<keyword id="KW-0813">Transport</keyword>